<proteinExistence type="inferred from homology"/>
<gene>
    <name evidence="1" type="primary">galK</name>
    <name type="ordered locus">ECIAI1_0725</name>
</gene>
<dbReference type="EC" id="2.7.1.6" evidence="1"/>
<dbReference type="EMBL" id="CU928160">
    <property type="protein sequence ID" value="CAQ97592.1"/>
    <property type="molecule type" value="Genomic_DNA"/>
</dbReference>
<dbReference type="RefSeq" id="WP_000053415.1">
    <property type="nucleotide sequence ID" value="NC_011741.1"/>
</dbReference>
<dbReference type="SMR" id="B7M6C0"/>
<dbReference type="GeneID" id="75170756"/>
<dbReference type="KEGG" id="ecr:ECIAI1_0725"/>
<dbReference type="HOGENOM" id="CLU_017814_2_1_6"/>
<dbReference type="UniPathway" id="UPA00214"/>
<dbReference type="GO" id="GO:0005829">
    <property type="term" value="C:cytosol"/>
    <property type="evidence" value="ECO:0007669"/>
    <property type="project" value="TreeGrafter"/>
</dbReference>
<dbReference type="GO" id="GO:0005524">
    <property type="term" value="F:ATP binding"/>
    <property type="evidence" value="ECO:0007669"/>
    <property type="project" value="UniProtKB-UniRule"/>
</dbReference>
<dbReference type="GO" id="GO:0004335">
    <property type="term" value="F:galactokinase activity"/>
    <property type="evidence" value="ECO:0007669"/>
    <property type="project" value="UniProtKB-UniRule"/>
</dbReference>
<dbReference type="GO" id="GO:0000287">
    <property type="term" value="F:magnesium ion binding"/>
    <property type="evidence" value="ECO:0007669"/>
    <property type="project" value="UniProtKB-UniRule"/>
</dbReference>
<dbReference type="GO" id="GO:0006012">
    <property type="term" value="P:galactose metabolic process"/>
    <property type="evidence" value="ECO:0007669"/>
    <property type="project" value="UniProtKB-UniRule"/>
</dbReference>
<dbReference type="FunFam" id="3.30.230.10:FF:000017">
    <property type="entry name" value="Galactokinase"/>
    <property type="match status" value="1"/>
</dbReference>
<dbReference type="FunFam" id="3.30.70.890:FF:000001">
    <property type="entry name" value="Galactokinase"/>
    <property type="match status" value="1"/>
</dbReference>
<dbReference type="Gene3D" id="3.30.230.10">
    <property type="match status" value="1"/>
</dbReference>
<dbReference type="Gene3D" id="3.30.70.890">
    <property type="entry name" value="GHMP kinase, C-terminal domain"/>
    <property type="match status" value="1"/>
</dbReference>
<dbReference type="HAMAP" id="MF_00246">
    <property type="entry name" value="Galactokinase"/>
    <property type="match status" value="1"/>
</dbReference>
<dbReference type="InterPro" id="IPR000705">
    <property type="entry name" value="Galactokinase"/>
</dbReference>
<dbReference type="InterPro" id="IPR022963">
    <property type="entry name" value="Galactokinase_bac"/>
</dbReference>
<dbReference type="InterPro" id="IPR019741">
    <property type="entry name" value="Galactokinase_CS"/>
</dbReference>
<dbReference type="InterPro" id="IPR019539">
    <property type="entry name" value="GalKase_N"/>
</dbReference>
<dbReference type="InterPro" id="IPR013750">
    <property type="entry name" value="GHMP_kinase_C_dom"/>
</dbReference>
<dbReference type="InterPro" id="IPR036554">
    <property type="entry name" value="GHMP_kinase_C_sf"/>
</dbReference>
<dbReference type="InterPro" id="IPR006204">
    <property type="entry name" value="GHMP_kinase_N_dom"/>
</dbReference>
<dbReference type="InterPro" id="IPR006203">
    <property type="entry name" value="GHMP_knse_ATP-bd_CS"/>
</dbReference>
<dbReference type="InterPro" id="IPR006206">
    <property type="entry name" value="Mevalonate/galactokinase"/>
</dbReference>
<dbReference type="InterPro" id="IPR020568">
    <property type="entry name" value="Ribosomal_Su5_D2-typ_SF"/>
</dbReference>
<dbReference type="InterPro" id="IPR014721">
    <property type="entry name" value="Ribsml_uS5_D2-typ_fold_subgr"/>
</dbReference>
<dbReference type="NCBIfam" id="TIGR00131">
    <property type="entry name" value="gal_kin"/>
    <property type="match status" value="1"/>
</dbReference>
<dbReference type="NCBIfam" id="NF003472">
    <property type="entry name" value="PRK05101.1"/>
    <property type="match status" value="1"/>
</dbReference>
<dbReference type="PANTHER" id="PTHR10457:SF7">
    <property type="entry name" value="GALACTOKINASE-RELATED"/>
    <property type="match status" value="1"/>
</dbReference>
<dbReference type="PANTHER" id="PTHR10457">
    <property type="entry name" value="MEVALONATE KINASE/GALACTOKINASE"/>
    <property type="match status" value="1"/>
</dbReference>
<dbReference type="Pfam" id="PF10509">
    <property type="entry name" value="GalKase_gal_bdg"/>
    <property type="match status" value="1"/>
</dbReference>
<dbReference type="Pfam" id="PF08544">
    <property type="entry name" value="GHMP_kinases_C"/>
    <property type="match status" value="1"/>
</dbReference>
<dbReference type="Pfam" id="PF00288">
    <property type="entry name" value="GHMP_kinases_N"/>
    <property type="match status" value="1"/>
</dbReference>
<dbReference type="PIRSF" id="PIRSF000530">
    <property type="entry name" value="Galactokinase"/>
    <property type="match status" value="1"/>
</dbReference>
<dbReference type="PRINTS" id="PR00473">
    <property type="entry name" value="GALCTOKINASE"/>
</dbReference>
<dbReference type="PRINTS" id="PR00959">
    <property type="entry name" value="MEVGALKINASE"/>
</dbReference>
<dbReference type="SUPFAM" id="SSF55060">
    <property type="entry name" value="GHMP Kinase, C-terminal domain"/>
    <property type="match status" value="1"/>
</dbReference>
<dbReference type="SUPFAM" id="SSF54211">
    <property type="entry name" value="Ribosomal protein S5 domain 2-like"/>
    <property type="match status" value="1"/>
</dbReference>
<dbReference type="PROSITE" id="PS00106">
    <property type="entry name" value="GALACTOKINASE"/>
    <property type="match status" value="1"/>
</dbReference>
<dbReference type="PROSITE" id="PS00627">
    <property type="entry name" value="GHMP_KINASES_ATP"/>
    <property type="match status" value="1"/>
</dbReference>
<comment type="function">
    <text evidence="1">Catalyzes the transfer of the gamma-phosphate of ATP to D-galactose to form alpha-D-galactose-1-phosphate (Gal-1-P).</text>
</comment>
<comment type="catalytic activity">
    <reaction evidence="1">
        <text>alpha-D-galactose + ATP = alpha-D-galactose 1-phosphate + ADP + H(+)</text>
        <dbReference type="Rhea" id="RHEA:13553"/>
        <dbReference type="ChEBI" id="CHEBI:15378"/>
        <dbReference type="ChEBI" id="CHEBI:28061"/>
        <dbReference type="ChEBI" id="CHEBI:30616"/>
        <dbReference type="ChEBI" id="CHEBI:58336"/>
        <dbReference type="ChEBI" id="CHEBI:456216"/>
        <dbReference type="EC" id="2.7.1.6"/>
    </reaction>
</comment>
<comment type="pathway">
    <text evidence="1">Carbohydrate metabolism; galactose metabolism.</text>
</comment>
<comment type="subcellular location">
    <subcellularLocation>
        <location evidence="1">Cytoplasm</location>
    </subcellularLocation>
</comment>
<comment type="similarity">
    <text evidence="1">Belongs to the GHMP kinase family. GalK subfamily.</text>
</comment>
<evidence type="ECO:0000255" key="1">
    <source>
        <dbReference type="HAMAP-Rule" id="MF_00246"/>
    </source>
</evidence>
<name>GAL1_ECO8A</name>
<feature type="chain" id="PRO_1000190063" description="Galactokinase">
    <location>
        <begin position="1"/>
        <end position="382"/>
    </location>
</feature>
<feature type="active site" description="Proton acceptor" evidence="1">
    <location>
        <position position="174"/>
    </location>
</feature>
<feature type="binding site" evidence="1">
    <location>
        <begin position="34"/>
        <end position="37"/>
    </location>
    <ligand>
        <name>substrate</name>
    </ligand>
</feature>
<feature type="binding site" evidence="1">
    <location>
        <begin position="124"/>
        <end position="130"/>
    </location>
    <ligand>
        <name>ATP</name>
        <dbReference type="ChEBI" id="CHEBI:30616"/>
    </ligand>
</feature>
<feature type="binding site" evidence="1">
    <location>
        <position position="130"/>
    </location>
    <ligand>
        <name>Mg(2+)</name>
        <dbReference type="ChEBI" id="CHEBI:18420"/>
    </ligand>
</feature>
<feature type="binding site" evidence="1">
    <location>
        <position position="162"/>
    </location>
    <ligand>
        <name>Mg(2+)</name>
        <dbReference type="ChEBI" id="CHEBI:18420"/>
    </ligand>
</feature>
<feature type="binding site" evidence="1">
    <location>
        <position position="223"/>
    </location>
    <ligand>
        <name>substrate</name>
    </ligand>
</feature>
<feature type="site" description="Transition state stabilizer" evidence="1">
    <location>
        <position position="28"/>
    </location>
</feature>
<accession>B7M6C0</accession>
<sequence>MSLKEKTQSLFANAFGYPATHTIQAPGRVNLIGEHTDYNDGFVLPCAIDYQTVISCAPRDDRKVRVMAADYENQLDEFSLDAPIVAHENYQWANYVRGVVKHLQLRNNSFGGVDMVISGNVPQGAGLSSSASLEVAVGTVLQQLYHLPLDGAQIALNGQEAENQFVGCNCGIMDQLISALGKKDHALLIDCRSLGTKAVSMPKGVAVVIINSNFKRTLVGSEYNTRREQCETGARFFQQPALRDVTIEEFNAVAHELDPIVAKRVRHILTENARTVEAASALEQGDLKRMGELMAESHASMRDDFEITVPQIDTLVEIVKAVIGDKGGVRMTGGGFGGCIVALIPEELVPAVQQAVAEQYEAKTGIKETFYVCKPSQGAGQC</sequence>
<reference key="1">
    <citation type="journal article" date="2009" name="PLoS Genet.">
        <title>Organised genome dynamics in the Escherichia coli species results in highly diverse adaptive paths.</title>
        <authorList>
            <person name="Touchon M."/>
            <person name="Hoede C."/>
            <person name="Tenaillon O."/>
            <person name="Barbe V."/>
            <person name="Baeriswyl S."/>
            <person name="Bidet P."/>
            <person name="Bingen E."/>
            <person name="Bonacorsi S."/>
            <person name="Bouchier C."/>
            <person name="Bouvet O."/>
            <person name="Calteau A."/>
            <person name="Chiapello H."/>
            <person name="Clermont O."/>
            <person name="Cruveiller S."/>
            <person name="Danchin A."/>
            <person name="Diard M."/>
            <person name="Dossat C."/>
            <person name="Karoui M.E."/>
            <person name="Frapy E."/>
            <person name="Garry L."/>
            <person name="Ghigo J.M."/>
            <person name="Gilles A.M."/>
            <person name="Johnson J."/>
            <person name="Le Bouguenec C."/>
            <person name="Lescat M."/>
            <person name="Mangenot S."/>
            <person name="Martinez-Jehanne V."/>
            <person name="Matic I."/>
            <person name="Nassif X."/>
            <person name="Oztas S."/>
            <person name="Petit M.A."/>
            <person name="Pichon C."/>
            <person name="Rouy Z."/>
            <person name="Ruf C.S."/>
            <person name="Schneider D."/>
            <person name="Tourret J."/>
            <person name="Vacherie B."/>
            <person name="Vallenet D."/>
            <person name="Medigue C."/>
            <person name="Rocha E.P.C."/>
            <person name="Denamur E."/>
        </authorList>
    </citation>
    <scope>NUCLEOTIDE SEQUENCE [LARGE SCALE GENOMIC DNA]</scope>
    <source>
        <strain>IAI1</strain>
    </source>
</reference>
<organism>
    <name type="scientific">Escherichia coli O8 (strain IAI1)</name>
    <dbReference type="NCBI Taxonomy" id="585034"/>
    <lineage>
        <taxon>Bacteria</taxon>
        <taxon>Pseudomonadati</taxon>
        <taxon>Pseudomonadota</taxon>
        <taxon>Gammaproteobacteria</taxon>
        <taxon>Enterobacterales</taxon>
        <taxon>Enterobacteriaceae</taxon>
        <taxon>Escherichia</taxon>
    </lineage>
</organism>
<keyword id="KW-0067">ATP-binding</keyword>
<keyword id="KW-0119">Carbohydrate metabolism</keyword>
<keyword id="KW-0963">Cytoplasm</keyword>
<keyword id="KW-0299">Galactose metabolism</keyword>
<keyword id="KW-0418">Kinase</keyword>
<keyword id="KW-0460">Magnesium</keyword>
<keyword id="KW-0479">Metal-binding</keyword>
<keyword id="KW-0547">Nucleotide-binding</keyword>
<keyword id="KW-0808">Transferase</keyword>
<protein>
    <recommendedName>
        <fullName evidence="1">Galactokinase</fullName>
        <ecNumber evidence="1">2.7.1.6</ecNumber>
    </recommendedName>
    <alternativeName>
        <fullName evidence="1">Galactose kinase</fullName>
    </alternativeName>
</protein>